<dbReference type="EC" id="3.6.5.-" evidence="1"/>
<dbReference type="EMBL" id="DS571148">
    <property type="protein sequence ID" value="EAL49849.2"/>
    <property type="molecule type" value="Genomic_DNA"/>
</dbReference>
<dbReference type="RefSeq" id="XP_655238.2">
    <property type="nucleotide sequence ID" value="XM_650146.2"/>
</dbReference>
<dbReference type="SMR" id="C4LTM1"/>
<dbReference type="FunCoup" id="C4LTM1">
    <property type="interactions" value="41"/>
</dbReference>
<dbReference type="GeneID" id="3409540"/>
<dbReference type="KEGG" id="ehi:EHI_012280"/>
<dbReference type="VEuPathDB" id="AmoebaDB:EHI5A_093900"/>
<dbReference type="VEuPathDB" id="AmoebaDB:EHI7A_106310"/>
<dbReference type="VEuPathDB" id="AmoebaDB:EHI8A_067450"/>
<dbReference type="VEuPathDB" id="AmoebaDB:EHI_012280"/>
<dbReference type="VEuPathDB" id="AmoebaDB:KM1_122850"/>
<dbReference type="eggNOG" id="KOG2203">
    <property type="taxonomic scope" value="Eukaryota"/>
</dbReference>
<dbReference type="InParanoid" id="C4LTM1"/>
<dbReference type="OMA" id="PIIKMTE"/>
<dbReference type="OrthoDB" id="1597724at2759"/>
<dbReference type="Proteomes" id="UP000001926">
    <property type="component" value="Partially assembled WGS sequence"/>
</dbReference>
<dbReference type="GO" id="GO:0005783">
    <property type="term" value="C:endoplasmic reticulum"/>
    <property type="evidence" value="ECO:0000318"/>
    <property type="project" value="GO_Central"/>
</dbReference>
<dbReference type="GO" id="GO:0005789">
    <property type="term" value="C:endoplasmic reticulum membrane"/>
    <property type="evidence" value="ECO:0007669"/>
    <property type="project" value="UniProtKB-SubCell"/>
</dbReference>
<dbReference type="GO" id="GO:0005525">
    <property type="term" value="F:GTP binding"/>
    <property type="evidence" value="ECO:0007669"/>
    <property type="project" value="UniProtKB-UniRule"/>
</dbReference>
<dbReference type="GO" id="GO:0003924">
    <property type="term" value="F:GTPase activity"/>
    <property type="evidence" value="ECO:0000318"/>
    <property type="project" value="GO_Central"/>
</dbReference>
<dbReference type="GO" id="GO:0016320">
    <property type="term" value="P:endoplasmic reticulum membrane fusion"/>
    <property type="evidence" value="ECO:0000318"/>
    <property type="project" value="GO_Central"/>
</dbReference>
<dbReference type="FunFam" id="3.40.50.300:FF:000727">
    <property type="entry name" value="Protein SEY1 homolog"/>
    <property type="match status" value="1"/>
</dbReference>
<dbReference type="Gene3D" id="3.40.50.300">
    <property type="entry name" value="P-loop containing nucleotide triphosphate hydrolases"/>
    <property type="match status" value="1"/>
</dbReference>
<dbReference type="HAMAP" id="MF_03109">
    <property type="entry name" value="Sey1"/>
    <property type="match status" value="1"/>
</dbReference>
<dbReference type="InterPro" id="IPR030386">
    <property type="entry name" value="G_GB1_RHD3_dom"/>
</dbReference>
<dbReference type="InterPro" id="IPR027417">
    <property type="entry name" value="P-loop_NTPase"/>
</dbReference>
<dbReference type="InterPro" id="IPR008803">
    <property type="entry name" value="RHD3/Sey1"/>
</dbReference>
<dbReference type="InterPro" id="IPR046758">
    <property type="entry name" value="Sey1/RHD3-like_3HB"/>
</dbReference>
<dbReference type="PANTHER" id="PTHR45923">
    <property type="entry name" value="PROTEIN SEY1"/>
    <property type="match status" value="1"/>
</dbReference>
<dbReference type="PANTHER" id="PTHR45923:SF2">
    <property type="entry name" value="PROTEIN SEY1"/>
    <property type="match status" value="1"/>
</dbReference>
<dbReference type="Pfam" id="PF05879">
    <property type="entry name" value="RHD3_GTPase"/>
    <property type="match status" value="1"/>
</dbReference>
<dbReference type="Pfam" id="PF20428">
    <property type="entry name" value="Sey1_3HB"/>
    <property type="match status" value="1"/>
</dbReference>
<dbReference type="SUPFAM" id="SSF52540">
    <property type="entry name" value="P-loop containing nucleoside triphosphate hydrolases"/>
    <property type="match status" value="1"/>
</dbReference>
<dbReference type="PROSITE" id="PS51715">
    <property type="entry name" value="G_GB1_RHD3"/>
    <property type="match status" value="1"/>
</dbReference>
<comment type="function">
    <text evidence="1">Probable GTP-binding protein that may be involved in cell development.</text>
</comment>
<comment type="subcellular location">
    <subcellularLocation>
        <location evidence="1">Endoplasmic reticulum membrane</location>
        <topology evidence="1">Multi-pass membrane protein</topology>
    </subcellularLocation>
</comment>
<comment type="similarity">
    <text evidence="2">Belongs to the TRAFAC class dynamin-like GTPase superfamily. GB1/RHD3 GTPase family. RHD3 subfamily.</text>
</comment>
<keyword id="KW-0175">Coiled coil</keyword>
<keyword id="KW-0256">Endoplasmic reticulum</keyword>
<keyword id="KW-0342">GTP-binding</keyword>
<keyword id="KW-0378">Hydrolase</keyword>
<keyword id="KW-0472">Membrane</keyword>
<keyword id="KW-0547">Nucleotide-binding</keyword>
<keyword id="KW-1185">Reference proteome</keyword>
<keyword id="KW-0812">Transmembrane</keyword>
<keyword id="KW-1133">Transmembrane helix</keyword>
<accession>C4LTM1</accession>
<organism>
    <name type="scientific">Entamoeba histolytica (strain ATCC 30459 / HM-1:IMSS / ABRM)</name>
    <dbReference type="NCBI Taxonomy" id="294381"/>
    <lineage>
        <taxon>Eukaryota</taxon>
        <taxon>Amoebozoa</taxon>
        <taxon>Evosea</taxon>
        <taxon>Archamoebae</taxon>
        <taxon>Mastigamoebida</taxon>
        <taxon>Entamoebidae</taxon>
        <taxon>Entamoeba</taxon>
    </lineage>
</organism>
<sequence length="959" mass="112118">MQESDVFHNQLRVEMLKKEEDEVENNSEKKKAPGIDMNKVNLIKTRDEDIIAENIKAELKEEEKENMKVEEEEIKEEEEKKEKENYPCMQIIDQEGIFADENQKDRITFEEFIQENTKFKELGFNYNMLSILGPQNSGKSTLLNYLFDTDFAVLNEKNGRQRTTRGVWLGLVGDRKDIIIMDLEGSDGSIREDDLSFERKISLFSLSVCSVLMVNIWSHDVGRYGASNMSLLKNIFELNLQLFQKEDSPKTLILFVIRDRDQRKPFENTKSVLLEDIMKIWESVARPECFKRAPIDKFFDLEFTSLPHFKHDKELFIQEAKELKKRFDCKNQNTYFRPIYNKEIPADGLALFTKQVWSAIKSNKDLDLPSQKEMLARFRCDELIENIFNEFEKEIEEIKLQHSEKHIFNNFKIFCDCLYDKKMKEFMNVASKYLDRVVKEKADLLSEKMLNEISYLFQTQMTLAINYIKTMLTTSYFTLKNQYITEQSSLFDPTKYAGYAEQMDDFNSTIKNEWEKISTQSVPSNIENNFEIEINTLDRFINKLYEIGRRDLIEALMTHFKKHLQNIMKPLLLPLFEQSNQNMWEQVRKVVIETTSQNLQELENGMINSLKMNKDDVEKKLNELQVYIIDAVRSTILERPGFVSNLMENKFISIFRLDDEGLPKKWKQNEDLSKPFFKAKEEAEKILDLFSYIRMDPKDDELSFISINPATGKKMIIEEPENGTIDQTKVLFSLSERLSIYEGFQNMAESNFIRAQQELAAITVHSKTPMWLILLIAFLSFDNIVYVFKSPTLLALTLIIIGIIYSLNKIGYAYLIDSVISYILSISWSSVLYLIQDLGLFKNLLPKPEAPKRKRPQKKTQDDKPKSSILLTHKKQPSVMGDVTMDNIDSLNSFDDAFKLVSQDEKPIRKPLHPLPKRETQSMKVMPMSASFTKSQSMFIKRNPTTTSSLNKIKEANEF</sequence>
<protein>
    <recommendedName>
        <fullName evidence="1">Protein SEY1 homolog 1</fullName>
        <ecNumber evidence="1">3.6.5.-</ecNumber>
    </recommendedName>
</protein>
<evidence type="ECO:0000255" key="1">
    <source>
        <dbReference type="HAMAP-Rule" id="MF_03109"/>
    </source>
</evidence>
<evidence type="ECO:0000255" key="2">
    <source>
        <dbReference type="PROSITE-ProRule" id="PRU01052"/>
    </source>
</evidence>
<evidence type="ECO:0000256" key="3">
    <source>
        <dbReference type="SAM" id="MobiDB-lite"/>
    </source>
</evidence>
<reference key="1">
    <citation type="journal article" date="2005" name="Nature">
        <title>The genome of the protist parasite Entamoeba histolytica.</title>
        <authorList>
            <person name="Loftus B.J."/>
            <person name="Anderson I."/>
            <person name="Davies R."/>
            <person name="Alsmark U.C."/>
            <person name="Samuelson J."/>
            <person name="Amedeo P."/>
            <person name="Roncaglia P."/>
            <person name="Berriman M."/>
            <person name="Hirt R.P."/>
            <person name="Mann B.J."/>
            <person name="Nozaki T."/>
            <person name="Suh B."/>
            <person name="Pop M."/>
            <person name="Duchene M."/>
            <person name="Ackers J."/>
            <person name="Tannich E."/>
            <person name="Leippe M."/>
            <person name="Hofer M."/>
            <person name="Bruchhaus I."/>
            <person name="Willhoeft U."/>
            <person name="Bhattacharya A."/>
            <person name="Chillingworth T."/>
            <person name="Churcher C.M."/>
            <person name="Hance Z."/>
            <person name="Harris B."/>
            <person name="Harris D."/>
            <person name="Jagels K."/>
            <person name="Moule S."/>
            <person name="Mungall K.L."/>
            <person name="Ormond D."/>
            <person name="Squares R."/>
            <person name="Whitehead S."/>
            <person name="Quail M.A."/>
            <person name="Rabbinowitsch E."/>
            <person name="Norbertczak H."/>
            <person name="Price C."/>
            <person name="Wang Z."/>
            <person name="Guillen N."/>
            <person name="Gilchrist C."/>
            <person name="Stroup S.E."/>
            <person name="Bhattacharya S."/>
            <person name="Lohia A."/>
            <person name="Foster P.G."/>
            <person name="Sicheritz-Ponten T."/>
            <person name="Weber C."/>
            <person name="Singh U."/>
            <person name="Mukherjee C."/>
            <person name="El-Sayed N.M.A."/>
            <person name="Petri W.A."/>
            <person name="Clark C.G."/>
            <person name="Embley T.M."/>
            <person name="Barrell B.G."/>
            <person name="Fraser C.M."/>
            <person name="Hall N."/>
        </authorList>
    </citation>
    <scope>NUCLEOTIDE SEQUENCE [LARGE SCALE GENOMIC DNA]</scope>
    <source>
        <strain>ATCC 30459 / HM-1:IMSS / ABRM</strain>
    </source>
</reference>
<reference key="2">
    <citation type="journal article" date="2010" name="PLoS Negl. Trop. Dis.">
        <title>New assembly, reannotation and analysis of the Entamoeba histolytica genome reveal new genomic features and protein content information.</title>
        <authorList>
            <person name="Lorenzi H.A."/>
            <person name="Puiu D."/>
            <person name="Miller J.R."/>
            <person name="Brinkac L.M."/>
            <person name="Amedeo P."/>
            <person name="Hall N."/>
            <person name="Caler E.V."/>
        </authorList>
    </citation>
    <scope>GENOME REANNOTATION</scope>
    <source>
        <strain>ATCC 30459 / HM-1:IMSS / ABRM</strain>
    </source>
</reference>
<proteinExistence type="inferred from homology"/>
<name>SEY11_ENTH1</name>
<gene>
    <name type="ORF">EHI_012280</name>
</gene>
<feature type="chain" id="PRO_0000384946" description="Protein SEY1 homolog 1">
    <location>
        <begin position="1"/>
        <end position="959"/>
    </location>
</feature>
<feature type="topological domain" description="Cytoplasmic" evidence="1">
    <location>
        <begin position="1"/>
        <end position="767"/>
    </location>
</feature>
<feature type="transmembrane region" description="Helical" evidence="1">
    <location>
        <begin position="768"/>
        <end position="788"/>
    </location>
</feature>
<feature type="topological domain" description="Lumenal" evidence="1">
    <location>
        <begin position="789"/>
        <end position="791"/>
    </location>
</feature>
<feature type="transmembrane region" description="Helical" evidence="1">
    <location>
        <begin position="792"/>
        <end position="812"/>
    </location>
</feature>
<feature type="topological domain" description="Cytoplasmic" evidence="1">
    <location>
        <begin position="813"/>
        <end position="959"/>
    </location>
</feature>
<feature type="domain" description="GB1/RHD3-type G" evidence="2">
    <location>
        <begin position="123"/>
        <end position="340"/>
    </location>
</feature>
<feature type="region of interest" description="Disordered" evidence="3">
    <location>
        <begin position="62"/>
        <end position="81"/>
    </location>
</feature>
<feature type="region of interest" description="Disordered" evidence="3">
    <location>
        <begin position="849"/>
        <end position="868"/>
    </location>
</feature>
<feature type="coiled-coil region" evidence="1">
    <location>
        <begin position="9"/>
        <end position="86"/>
    </location>
</feature>
<feature type="binding site" evidence="1">
    <location>
        <begin position="133"/>
        <end position="140"/>
    </location>
    <ligand>
        <name>GTP</name>
        <dbReference type="ChEBI" id="CHEBI:37565"/>
    </ligand>
</feature>